<proteinExistence type="inferred from homology"/>
<sequence length="434" mass="48225">MSIDIDWERATSGPDGELLAERIRSFIHDKFQQIVLPRFIRSVQVTSFNFGTIPPELEIRDLCDPFPDFYEEDDNENFSESSEEQSPTREPVDRYGSKVESWQANSPGSLEDHMQGRMGFNGPLRMPPGEENTGISPLRSPMNFGDINPYLFPRSRTPGIPGGTSNLGYYMPLSGLSGSQTPLGTVARGSPFSGGWPDVHGARPSRRRSEVEPDSAQSRPSTANTGNTLLSRGSMSSGDPRHSHHSQGVPGSDHGQVLEPNMPPTSSDAPLDDLPPRRMREQKAEDFQVFCRTKYAGNISLSLTAEILLDYPMPSFVGLPLKLNITGLTFDAVAVIAYIRRRIHFCFLSPEDADALIGPEIGSGGGEDTLEPNSPRRKPLSLLREIRVESEIGRKENGKQALKNVGKVEKFVLEQVRRIFEEEFVYPSFWTFLV</sequence>
<comment type="function">
    <text evidence="1">Component of the ERMES/MDM complex, which serves as a molecular tether to connect the endoplasmic reticulum (ER) and mitochondria. Components of this complex are involved in the control of mitochondrial shape and protein biogenesis, and function in nonvesicular lipid trafficking between the ER and mitochondria. MDM12 is required for the interaction of the ER-resident membrane protein MMM1 and the outer mitochondrial membrane-resident beta-barrel protein MDM10. The MDM12-MMM1 subcomplex functions in the major beta-barrel assembly pathway that is responsible for biogenesis of all mitochondrial outer membrane beta-barrel proteins, and acts in a late step after the SAM complex. The MDM10-MDM12-MMM1 subcomplex further acts in the TOM40-specific pathway after the action of the MDM12-MMM1 complex. Essential for establishing and maintaining the structure of mitochondria and maintenance of mtDNA nucleoids.</text>
</comment>
<comment type="subunit">
    <text evidence="1">Component of the ER-mitochondria encounter structure (ERMES) or MDM complex, composed of MMM1, MDM10, MDM12 and MDM34. A MMM1 homodimer associates with one molecule of MDM12 on each side in a pairwise head-to-tail manner, and the SMP-LTD domains of MMM1 and MDM12 generate a continuous hydrophobic tunnel for phospholipid trafficking.</text>
</comment>
<comment type="subcellular location">
    <subcellularLocation>
        <location evidence="1">Mitochondrion outer membrane</location>
        <topology evidence="1">Peripheral membrane protein</topology>
        <orientation evidence="1">Cytoplasmic side</orientation>
    </subcellularLocation>
    <subcellularLocation>
        <location evidence="1">Endoplasmic reticulum membrane</location>
        <topology evidence="1">Peripheral membrane protein</topology>
        <orientation evidence="1">Cytoplasmic side</orientation>
    </subcellularLocation>
    <text evidence="1">The ERMES/MDM complex localizes to a few discrete foci (around 10 per single cell), that represent mitochondria-endoplasmic reticulum junctions. These foci are often found next to mtDNA nucleoids.</text>
</comment>
<comment type="domain">
    <text evidence="1">The SMP-LTD domain is a barrel-like domain that can bind various types of glycerophospholipids in its interior and mediate their transfer between two adjacent bilayers.</text>
</comment>
<comment type="similarity">
    <text evidence="1">Belongs to the MDM12 family.</text>
</comment>
<organism>
    <name type="scientific">Blastomyces gilchristii (strain SLH14081)</name>
    <name type="common">Blastomyces dermatitidis</name>
    <dbReference type="NCBI Taxonomy" id="559298"/>
    <lineage>
        <taxon>Eukaryota</taxon>
        <taxon>Fungi</taxon>
        <taxon>Dikarya</taxon>
        <taxon>Ascomycota</taxon>
        <taxon>Pezizomycotina</taxon>
        <taxon>Eurotiomycetes</taxon>
        <taxon>Eurotiomycetidae</taxon>
        <taxon>Onygenales</taxon>
        <taxon>Ajellomycetaceae</taxon>
        <taxon>Blastomyces</taxon>
    </lineage>
</organism>
<name>MDM12_BLAGS</name>
<dbReference type="EMBL" id="GG657470">
    <property type="protein sequence ID" value="OAT13161.1"/>
    <property type="molecule type" value="Genomic_DNA"/>
</dbReference>
<dbReference type="RefSeq" id="XP_002621385.1">
    <property type="nucleotide sequence ID" value="XM_002621339.1"/>
</dbReference>
<dbReference type="SMR" id="C5K0S2"/>
<dbReference type="STRING" id="559298.C5K0S2"/>
<dbReference type="GeneID" id="8508618"/>
<dbReference type="KEGG" id="bgh:BDBG_08416"/>
<dbReference type="VEuPathDB" id="FungiDB:BDBG_08416"/>
<dbReference type="HOGENOM" id="CLU_026794_0_0_1"/>
<dbReference type="OrthoDB" id="3356905at2759"/>
<dbReference type="Proteomes" id="UP000002038">
    <property type="component" value="Unassembled WGS sequence"/>
</dbReference>
<dbReference type="GO" id="GO:0005789">
    <property type="term" value="C:endoplasmic reticulum membrane"/>
    <property type="evidence" value="ECO:0007669"/>
    <property type="project" value="UniProtKB-SubCell"/>
</dbReference>
<dbReference type="GO" id="GO:0032865">
    <property type="term" value="C:ERMES complex"/>
    <property type="evidence" value="ECO:0007669"/>
    <property type="project" value="UniProtKB-UniRule"/>
</dbReference>
<dbReference type="GO" id="GO:0008289">
    <property type="term" value="F:lipid binding"/>
    <property type="evidence" value="ECO:0007669"/>
    <property type="project" value="UniProtKB-KW"/>
</dbReference>
<dbReference type="GO" id="GO:0000002">
    <property type="term" value="P:mitochondrial genome maintenance"/>
    <property type="evidence" value="ECO:0007669"/>
    <property type="project" value="UniProtKB-UniRule"/>
</dbReference>
<dbReference type="GO" id="GO:1990456">
    <property type="term" value="P:mitochondrion-endoplasmic reticulum membrane tethering"/>
    <property type="evidence" value="ECO:0007669"/>
    <property type="project" value="TreeGrafter"/>
</dbReference>
<dbReference type="GO" id="GO:0015914">
    <property type="term" value="P:phospholipid transport"/>
    <property type="evidence" value="ECO:0007669"/>
    <property type="project" value="TreeGrafter"/>
</dbReference>
<dbReference type="GO" id="GO:0045040">
    <property type="term" value="P:protein insertion into mitochondrial outer membrane"/>
    <property type="evidence" value="ECO:0007669"/>
    <property type="project" value="UniProtKB-UniRule"/>
</dbReference>
<dbReference type="CDD" id="cd21672">
    <property type="entry name" value="SMP_Mdm12"/>
    <property type="match status" value="1"/>
</dbReference>
<dbReference type="HAMAP" id="MF_03104">
    <property type="entry name" value="Mdm12"/>
    <property type="match status" value="1"/>
</dbReference>
<dbReference type="InterPro" id="IPR027532">
    <property type="entry name" value="Mdm12"/>
</dbReference>
<dbReference type="InterPro" id="IPR019411">
    <property type="entry name" value="MMM1_dom"/>
</dbReference>
<dbReference type="InterPro" id="IPR031468">
    <property type="entry name" value="SMP_LBD"/>
</dbReference>
<dbReference type="PANTHER" id="PTHR28204">
    <property type="entry name" value="MITOCHONDRIAL DISTRIBUTION AND MORPHOLOGY PROTEIN 12"/>
    <property type="match status" value="1"/>
</dbReference>
<dbReference type="PANTHER" id="PTHR28204:SF1">
    <property type="entry name" value="MITOCHONDRIAL DISTRIBUTION AND MORPHOLOGY PROTEIN 12"/>
    <property type="match status" value="1"/>
</dbReference>
<dbReference type="Pfam" id="PF10296">
    <property type="entry name" value="MMM1"/>
    <property type="match status" value="1"/>
</dbReference>
<dbReference type="PROSITE" id="PS51847">
    <property type="entry name" value="SMP"/>
    <property type="match status" value="1"/>
</dbReference>
<evidence type="ECO:0000255" key="1">
    <source>
        <dbReference type="HAMAP-Rule" id="MF_03104"/>
    </source>
</evidence>
<evidence type="ECO:0000256" key="2">
    <source>
        <dbReference type="SAM" id="MobiDB-lite"/>
    </source>
</evidence>
<accession>C5K0S2</accession>
<accession>A0A179V1F7</accession>
<feature type="chain" id="PRO_0000384266" description="Mitochondrial distribution and morphology protein 12">
    <location>
        <begin position="1"/>
        <end position="434"/>
    </location>
</feature>
<feature type="domain" description="SMP-LTD" evidence="1">
    <location>
        <begin position="1"/>
        <end position="434"/>
    </location>
</feature>
<feature type="region of interest" description="Disordered" evidence="2">
    <location>
        <begin position="70"/>
        <end position="141"/>
    </location>
</feature>
<feature type="region of interest" description="Disordered" evidence="2">
    <location>
        <begin position="181"/>
        <end position="275"/>
    </location>
</feature>
<feature type="compositionally biased region" description="Acidic residues" evidence="2">
    <location>
        <begin position="70"/>
        <end position="83"/>
    </location>
</feature>
<feature type="compositionally biased region" description="Basic and acidic residues" evidence="2">
    <location>
        <begin position="86"/>
        <end position="97"/>
    </location>
</feature>
<feature type="compositionally biased region" description="Polar residues" evidence="2">
    <location>
        <begin position="215"/>
        <end position="237"/>
    </location>
</feature>
<protein>
    <recommendedName>
        <fullName evidence="1">Mitochondrial distribution and morphology protein 12</fullName>
    </recommendedName>
    <alternativeName>
        <fullName evidence="1">Mitochondrial inheritance component MDM12</fullName>
    </alternativeName>
</protein>
<keyword id="KW-0256">Endoplasmic reticulum</keyword>
<keyword id="KW-0445">Lipid transport</keyword>
<keyword id="KW-0446">Lipid-binding</keyword>
<keyword id="KW-0472">Membrane</keyword>
<keyword id="KW-0496">Mitochondrion</keyword>
<keyword id="KW-1000">Mitochondrion outer membrane</keyword>
<keyword id="KW-1185">Reference proteome</keyword>
<keyword id="KW-0813">Transport</keyword>
<reference key="1">
    <citation type="journal article" date="2015" name="PLoS Genet.">
        <title>The dynamic genome and transcriptome of the human fungal pathogen Blastomyces and close relative Emmonsia.</title>
        <authorList>
            <person name="Munoz J.F."/>
            <person name="Gauthier G.M."/>
            <person name="Desjardins C.A."/>
            <person name="Gallo J.E."/>
            <person name="Holder J."/>
            <person name="Sullivan T.D."/>
            <person name="Marty A.J."/>
            <person name="Carmen J.C."/>
            <person name="Chen Z."/>
            <person name="Ding L."/>
            <person name="Gujja S."/>
            <person name="Magrini V."/>
            <person name="Misas E."/>
            <person name="Mitreva M."/>
            <person name="Priest M."/>
            <person name="Saif S."/>
            <person name="Whiston E.A."/>
            <person name="Young S."/>
            <person name="Zeng Q."/>
            <person name="Goldman W.E."/>
            <person name="Mardis E.R."/>
            <person name="Taylor J.W."/>
            <person name="McEwen J.G."/>
            <person name="Clay O.K."/>
            <person name="Klein B.S."/>
            <person name="Cuomo C.A."/>
        </authorList>
    </citation>
    <scope>NUCLEOTIDE SEQUENCE [LARGE SCALE GENOMIC DNA]</scope>
    <source>
        <strain>SLH14081</strain>
    </source>
</reference>
<gene>
    <name evidence="1" type="primary">MDM12</name>
    <name type="ORF">BDBG_08416</name>
</gene>